<name>CPHB_NOSS1</name>
<proteinExistence type="inferred from homology"/>
<comment type="function">
    <text>Exopeptidase that catalyzes the hydrolytic cleavage of multi-L-arginyl-poly-L-aspartic acid (cyanophycin; a water-insoluble reserve polymer) into aspartate-arginine dipeptides.</text>
</comment>
<comment type="catalytic activity">
    <reaction>
        <text>[L-4-(L-arginin-2-N-yl)aspartate](n) + H2O = [L-4-(L-arginin-2-N-yl)aspartate](n-1) + L-4-(L-arginin-2-N-yl)aspartate</text>
        <dbReference type="Rhea" id="RHEA:12845"/>
        <dbReference type="Rhea" id="RHEA-COMP:13728"/>
        <dbReference type="Rhea" id="RHEA-COMP:13734"/>
        <dbReference type="ChEBI" id="CHEBI:15377"/>
        <dbReference type="ChEBI" id="CHEBI:137986"/>
        <dbReference type="ChEBI" id="CHEBI:137991"/>
        <dbReference type="EC" id="3.4.15.6"/>
    </reaction>
</comment>
<comment type="similarity">
    <text evidence="2">Belongs to the peptidase S51 family.</text>
</comment>
<dbReference type="EC" id="3.4.15.6"/>
<dbReference type="EMBL" id="BA000019">
    <property type="protein sequence ID" value="BAB75579.1"/>
    <property type="molecule type" value="Genomic_DNA"/>
</dbReference>
<dbReference type="PIR" id="AI2290">
    <property type="entry name" value="AI2290"/>
</dbReference>
<dbReference type="SMR" id="P58562"/>
<dbReference type="STRING" id="103690.gene:10495922"/>
<dbReference type="KEGG" id="ana:all3880"/>
<dbReference type="eggNOG" id="COG4242">
    <property type="taxonomic scope" value="Bacteria"/>
</dbReference>
<dbReference type="Proteomes" id="UP000002483">
    <property type="component" value="Chromosome"/>
</dbReference>
<dbReference type="GO" id="GO:0008241">
    <property type="term" value="F:peptidyl-dipeptidase activity"/>
    <property type="evidence" value="ECO:0007669"/>
    <property type="project" value="UniProtKB-EC"/>
</dbReference>
<dbReference type="GO" id="GO:0008236">
    <property type="term" value="F:serine-type peptidase activity"/>
    <property type="evidence" value="ECO:0007669"/>
    <property type="project" value="UniProtKB-KW"/>
</dbReference>
<dbReference type="GO" id="GO:0006508">
    <property type="term" value="P:proteolysis"/>
    <property type="evidence" value="ECO:0007669"/>
    <property type="project" value="UniProtKB-KW"/>
</dbReference>
<dbReference type="CDD" id="cd03145">
    <property type="entry name" value="GAT1_cyanophycinase"/>
    <property type="match status" value="1"/>
</dbReference>
<dbReference type="Gene3D" id="3.40.50.880">
    <property type="match status" value="1"/>
</dbReference>
<dbReference type="InterPro" id="IPR029062">
    <property type="entry name" value="Class_I_gatase-like"/>
</dbReference>
<dbReference type="InterPro" id="IPR005320">
    <property type="entry name" value="Peptidase_S51"/>
</dbReference>
<dbReference type="InterPro" id="IPR011811">
    <property type="entry name" value="Peptidase_S51_cyanophycinase"/>
</dbReference>
<dbReference type="NCBIfam" id="TIGR02069">
    <property type="entry name" value="cyanophycinase"/>
    <property type="match status" value="1"/>
</dbReference>
<dbReference type="PANTHER" id="PTHR36175">
    <property type="entry name" value="CYANOPHYCINASE"/>
    <property type="match status" value="1"/>
</dbReference>
<dbReference type="PANTHER" id="PTHR36175:SF1">
    <property type="entry name" value="CYANOPHYCINASE"/>
    <property type="match status" value="1"/>
</dbReference>
<dbReference type="Pfam" id="PF03575">
    <property type="entry name" value="Peptidase_S51"/>
    <property type="match status" value="1"/>
</dbReference>
<dbReference type="PIRSF" id="PIRSF032067">
    <property type="entry name" value="Cyanophycinase"/>
    <property type="match status" value="1"/>
</dbReference>
<dbReference type="SUPFAM" id="SSF52317">
    <property type="entry name" value="Class I glutamine amidotransferase-like"/>
    <property type="match status" value="1"/>
</dbReference>
<protein>
    <recommendedName>
        <fullName>Cyanophycinase</fullName>
        <ecNumber>3.4.15.6</ecNumber>
    </recommendedName>
</protein>
<keyword id="KW-0378">Hydrolase</keyword>
<keyword id="KW-0645">Protease</keyword>
<keyword id="KW-1185">Reference proteome</keyword>
<keyword id="KW-0720">Serine protease</keyword>
<reference key="1">
    <citation type="journal article" date="2001" name="DNA Res.">
        <title>Complete genomic sequence of the filamentous nitrogen-fixing cyanobacterium Anabaena sp. strain PCC 7120.</title>
        <authorList>
            <person name="Kaneko T."/>
            <person name="Nakamura Y."/>
            <person name="Wolk C.P."/>
            <person name="Kuritz T."/>
            <person name="Sasamoto S."/>
            <person name="Watanabe A."/>
            <person name="Iriguchi M."/>
            <person name="Ishikawa A."/>
            <person name="Kawashima K."/>
            <person name="Kimura T."/>
            <person name="Kishida Y."/>
            <person name="Kohara M."/>
            <person name="Matsumoto M."/>
            <person name="Matsuno A."/>
            <person name="Muraki A."/>
            <person name="Nakazaki N."/>
            <person name="Shimpo S."/>
            <person name="Sugimoto M."/>
            <person name="Takazawa M."/>
            <person name="Yamada M."/>
            <person name="Yasuda M."/>
            <person name="Tabata S."/>
        </authorList>
    </citation>
    <scope>NUCLEOTIDE SEQUENCE [LARGE SCALE GENOMIC DNA]</scope>
    <source>
        <strain>PCC 7120 / SAG 25.82 / UTEX 2576</strain>
    </source>
</reference>
<evidence type="ECO:0000250" key="1"/>
<evidence type="ECO:0000305" key="2"/>
<accession>P58562</accession>
<gene>
    <name type="primary">cphB</name>
    <name type="ordered locus">all3880</name>
</gene>
<organism>
    <name type="scientific">Nostoc sp. (strain PCC 7120 / SAG 25.82 / UTEX 2576)</name>
    <dbReference type="NCBI Taxonomy" id="103690"/>
    <lineage>
        <taxon>Bacteria</taxon>
        <taxon>Bacillati</taxon>
        <taxon>Cyanobacteriota</taxon>
        <taxon>Cyanophyceae</taxon>
        <taxon>Nostocales</taxon>
        <taxon>Nostocaceae</taxon>
        <taxon>Nostoc</taxon>
    </lineage>
</organism>
<feature type="chain" id="PRO_0000209971" description="Cyanophycinase">
    <location>
        <begin position="1"/>
        <end position="298"/>
    </location>
</feature>
<feature type="active site" description="Charge relay system" evidence="1">
    <location>
        <position position="155"/>
    </location>
</feature>
<feature type="active site" description="Charge relay system" evidence="1">
    <location>
        <position position="173"/>
    </location>
</feature>
<feature type="active site" description="Charge relay system" evidence="1">
    <location>
        <position position="197"/>
    </location>
</feature>
<sequence length="298" mass="32363">MAPKVVDRRNTMPQLQAKSLEMRTPQATKTAVLVIGGAEDKVHGREILRTFFGRAGASKAYITIIPSASREPAIIGGRYIRIFEEMGAEKVEILDIREREQCESSQVKASLEACSGVFLTGGDQLRLCGVLSDTPVMEIIRQRVRGGQLTLAGTSAGAAVMGHHMIAGGGSGETPNRSLVDMATGLGLIPEVIVDQHFHNRNRMGRLISAVAAHPDRLGIGIDEDTCAVFERDGWLQVLGKGSVTIVDPTELTHTNEPHVGANEPLTVHNLRLHILSYGDRFHLYQRTVLPAVHRISS</sequence>